<feature type="chain" id="PRO_0000299651" description="Putative uncharacterized protein YLR437C-A">
    <location>
        <begin position="1"/>
        <end position="75"/>
    </location>
</feature>
<name>YL37A_YEAST</name>
<sequence length="75" mass="7918">MAMALVDGRISAQEVEVQLTLRVPHMCALSLVKNDGQGVVVVGGVFVFPFNGLLGGEGSFGHWCCGSVLLWCLVV</sequence>
<proteinExistence type="uncertain"/>
<dbReference type="EMBL" id="U21094">
    <property type="status" value="NOT_ANNOTATED_CDS"/>
    <property type="molecule type" value="Genomic_DNA"/>
</dbReference>
<dbReference type="EMBL" id="AF479928">
    <property type="protein sequence ID" value="AAL79241.1"/>
    <property type="molecule type" value="Genomic_DNA"/>
</dbReference>
<dbReference type="PaxDb" id="4932-YLR437C-A"/>
<dbReference type="EnsemblFungi" id="YLR437C-A_mRNA">
    <property type="protein sequence ID" value="YLR437C-A"/>
    <property type="gene ID" value="YLR437C-A"/>
</dbReference>
<dbReference type="AGR" id="SGD:S000028684"/>
<dbReference type="SGD" id="S000028684">
    <property type="gene designation" value="YLR437C-A"/>
</dbReference>
<dbReference type="HOGENOM" id="CLU_2672990_0_0_1"/>
<comment type="miscellaneous">
    <text evidence="1">Partially overlaps CAR2.</text>
</comment>
<comment type="caution">
    <text evidence="2">Product of a dubious gene prediction unlikely to encode a functional protein. Because of that it is not part of the S.cerevisiae S288c complete/reference proteome set.</text>
</comment>
<gene>
    <name type="ordered locus">YLR437C-A</name>
</gene>
<protein>
    <recommendedName>
        <fullName>Putative uncharacterized protein YLR437C-A</fullName>
    </recommendedName>
</protein>
<accession>Q8TGR0</accession>
<evidence type="ECO:0000305" key="1"/>
<evidence type="ECO:0000305" key="2">
    <source>
    </source>
</evidence>
<reference key="1">
    <citation type="journal article" date="1997" name="Nature">
        <title>The nucleotide sequence of Saccharomyces cerevisiae chromosome XII.</title>
        <authorList>
            <person name="Johnston M."/>
            <person name="Hillier L.W."/>
            <person name="Riles L."/>
            <person name="Albermann K."/>
            <person name="Andre B."/>
            <person name="Ansorge W."/>
            <person name="Benes V."/>
            <person name="Brueckner M."/>
            <person name="Delius H."/>
            <person name="Dubois E."/>
            <person name="Duesterhoeft A."/>
            <person name="Entian K.-D."/>
            <person name="Floeth M."/>
            <person name="Goffeau A."/>
            <person name="Hebling U."/>
            <person name="Heumann K."/>
            <person name="Heuss-Neitzel D."/>
            <person name="Hilbert H."/>
            <person name="Hilger F."/>
            <person name="Kleine K."/>
            <person name="Koetter P."/>
            <person name="Louis E.J."/>
            <person name="Messenguy F."/>
            <person name="Mewes H.-W."/>
            <person name="Miosga T."/>
            <person name="Moestl D."/>
            <person name="Mueller-Auer S."/>
            <person name="Nentwich U."/>
            <person name="Obermaier B."/>
            <person name="Piravandi E."/>
            <person name="Pohl T.M."/>
            <person name="Portetelle D."/>
            <person name="Purnelle B."/>
            <person name="Rechmann S."/>
            <person name="Rieger M."/>
            <person name="Rinke M."/>
            <person name="Rose M."/>
            <person name="Scharfe M."/>
            <person name="Scherens B."/>
            <person name="Scholler P."/>
            <person name="Schwager C."/>
            <person name="Schwarz S."/>
            <person name="Underwood A.P."/>
            <person name="Urrestarazu L.A."/>
            <person name="Vandenbol M."/>
            <person name="Verhasselt P."/>
            <person name="Vierendeels F."/>
            <person name="Voet M."/>
            <person name="Volckaert G."/>
            <person name="Voss H."/>
            <person name="Wambutt R."/>
            <person name="Wedler E."/>
            <person name="Wedler H."/>
            <person name="Zimmermann F.K."/>
            <person name="Zollner A."/>
            <person name="Hani J."/>
            <person name="Hoheisel J.D."/>
        </authorList>
    </citation>
    <scope>NUCLEOTIDE SEQUENCE [LARGE SCALE GENOMIC DNA]</scope>
    <source>
        <strain>ATCC 204508 / S288c</strain>
    </source>
</reference>
<reference key="2">
    <citation type="journal article" date="2014" name="G3 (Bethesda)">
        <title>The reference genome sequence of Saccharomyces cerevisiae: Then and now.</title>
        <authorList>
            <person name="Engel S.R."/>
            <person name="Dietrich F.S."/>
            <person name="Fisk D.G."/>
            <person name="Binkley G."/>
            <person name="Balakrishnan R."/>
            <person name="Costanzo M.C."/>
            <person name="Dwight S.S."/>
            <person name="Hitz B.C."/>
            <person name="Karra K."/>
            <person name="Nash R.S."/>
            <person name="Weng S."/>
            <person name="Wong E.D."/>
            <person name="Lloyd P."/>
            <person name="Skrzypek M.S."/>
            <person name="Miyasato S.R."/>
            <person name="Simison M."/>
            <person name="Cherry J.M."/>
        </authorList>
    </citation>
    <scope>GENOME REANNOTATION</scope>
    <source>
        <strain>ATCC 204508 / S288c</strain>
    </source>
</reference>
<reference key="3">
    <citation type="journal article" date="2002" name="Nat. Biotechnol.">
        <title>An integrated approach for finding overlooked genes in yeast.</title>
        <authorList>
            <person name="Kumar A."/>
            <person name="Harrison P.M."/>
            <person name="Cheung K.-H."/>
            <person name="Lan N."/>
            <person name="Echols N."/>
            <person name="Bertone P."/>
            <person name="Miller P."/>
            <person name="Gerstein M.B."/>
            <person name="Snyder M."/>
        </authorList>
    </citation>
    <scope>NUCLEOTIDE SEQUENCE [GENOMIC DNA]</scope>
</reference>
<organism>
    <name type="scientific">Saccharomyces cerevisiae (strain ATCC 204508 / S288c)</name>
    <name type="common">Baker's yeast</name>
    <dbReference type="NCBI Taxonomy" id="559292"/>
    <lineage>
        <taxon>Eukaryota</taxon>
        <taxon>Fungi</taxon>
        <taxon>Dikarya</taxon>
        <taxon>Ascomycota</taxon>
        <taxon>Saccharomycotina</taxon>
        <taxon>Saccharomycetes</taxon>
        <taxon>Saccharomycetales</taxon>
        <taxon>Saccharomycetaceae</taxon>
        <taxon>Saccharomyces</taxon>
    </lineage>
</organism>